<accession>C0QHJ8</accession>
<gene>
    <name evidence="1" type="primary">clpX</name>
    <name type="ordered locus">HRM2_04390</name>
</gene>
<feature type="chain" id="PRO_1000203729" description="ATP-dependent Clp protease ATP-binding subunit ClpX">
    <location>
        <begin position="1"/>
        <end position="418"/>
    </location>
</feature>
<feature type="domain" description="ClpX-type ZB" evidence="2">
    <location>
        <begin position="1"/>
        <end position="54"/>
    </location>
</feature>
<feature type="binding site" evidence="2">
    <location>
        <position position="13"/>
    </location>
    <ligand>
        <name>Zn(2+)</name>
        <dbReference type="ChEBI" id="CHEBI:29105"/>
    </ligand>
</feature>
<feature type="binding site" evidence="2">
    <location>
        <position position="16"/>
    </location>
    <ligand>
        <name>Zn(2+)</name>
        <dbReference type="ChEBI" id="CHEBI:29105"/>
    </ligand>
</feature>
<feature type="binding site" evidence="2">
    <location>
        <position position="35"/>
    </location>
    <ligand>
        <name>Zn(2+)</name>
        <dbReference type="ChEBI" id="CHEBI:29105"/>
    </ligand>
</feature>
<feature type="binding site" evidence="2">
    <location>
        <position position="38"/>
    </location>
    <ligand>
        <name>Zn(2+)</name>
        <dbReference type="ChEBI" id="CHEBI:29105"/>
    </ligand>
</feature>
<feature type="binding site" evidence="1">
    <location>
        <begin position="120"/>
        <end position="127"/>
    </location>
    <ligand>
        <name>ATP</name>
        <dbReference type="ChEBI" id="CHEBI:30616"/>
    </ligand>
</feature>
<comment type="function">
    <text evidence="1">ATP-dependent specificity component of the Clp protease. It directs the protease to specific substrates. Can perform chaperone functions in the absence of ClpP.</text>
</comment>
<comment type="subunit">
    <text evidence="1">Component of the ClpX-ClpP complex. Forms a hexameric ring that, in the presence of ATP, binds to fourteen ClpP subunits assembled into a disk-like structure with a central cavity, resembling the structure of eukaryotic proteasomes.</text>
</comment>
<comment type="similarity">
    <text evidence="1">Belongs to the ClpX chaperone family.</text>
</comment>
<organism>
    <name type="scientific">Desulforapulum autotrophicum (strain ATCC 43914 / DSM 3382 / VKM B-1955 / HRM2)</name>
    <name type="common">Desulfobacterium autotrophicum</name>
    <dbReference type="NCBI Taxonomy" id="177437"/>
    <lineage>
        <taxon>Bacteria</taxon>
        <taxon>Pseudomonadati</taxon>
        <taxon>Thermodesulfobacteriota</taxon>
        <taxon>Desulfobacteria</taxon>
        <taxon>Desulfobacterales</taxon>
        <taxon>Desulfobacteraceae</taxon>
        <taxon>Desulforapulum</taxon>
    </lineage>
</organism>
<sequence>MTRKDDESDQFFCSFCGKNQKEVKKLIAGPSVYICNECVSLCEEIIEDEDKESLAPAEASDKKLTPREIKDVLDTYVIEQDRAKKVLSVAVYNHYKRLDAEVKSEDDVEIQKSNILLIGPTGCGKTLLAQTLARFLDVPFALADATTLTEAGYVGEDVENIILSLVQNADYDIEKAQRGIIYIDEVDKISQRGDNPSITRDVSGEGVQQALLKIIEGTTASIPPKGGRKHPQQDFVKVETSNILFVCGGTFTGLEKVIERRISQKSMGFGAEVQSRKEKNVGELLEQLKPEDLIKFGLIPEFLGRLPVVTSLSELNEASLVKILTEPKNALLKQYQRLFEFENVKLTFTEEALAAMAKEAVTRRSGARGLRAIMEETMLDIMYELPSTENVRECIVGEEVVLKHEPPILLFEQAKKQA</sequence>
<evidence type="ECO:0000255" key="1">
    <source>
        <dbReference type="HAMAP-Rule" id="MF_00175"/>
    </source>
</evidence>
<evidence type="ECO:0000255" key="2">
    <source>
        <dbReference type="PROSITE-ProRule" id="PRU01250"/>
    </source>
</evidence>
<dbReference type="EMBL" id="CP001087">
    <property type="protein sequence ID" value="ACN13556.1"/>
    <property type="molecule type" value="Genomic_DNA"/>
</dbReference>
<dbReference type="RefSeq" id="WP_012662805.1">
    <property type="nucleotide sequence ID" value="NC_012108.1"/>
</dbReference>
<dbReference type="SMR" id="C0QHJ8"/>
<dbReference type="STRING" id="177437.HRM2_04390"/>
<dbReference type="KEGG" id="dat:HRM2_04390"/>
<dbReference type="eggNOG" id="COG1219">
    <property type="taxonomic scope" value="Bacteria"/>
</dbReference>
<dbReference type="HOGENOM" id="CLU_014218_8_2_7"/>
<dbReference type="OrthoDB" id="9804062at2"/>
<dbReference type="Proteomes" id="UP000000442">
    <property type="component" value="Chromosome"/>
</dbReference>
<dbReference type="GO" id="GO:0009376">
    <property type="term" value="C:HslUV protease complex"/>
    <property type="evidence" value="ECO:0007669"/>
    <property type="project" value="TreeGrafter"/>
</dbReference>
<dbReference type="GO" id="GO:0005524">
    <property type="term" value="F:ATP binding"/>
    <property type="evidence" value="ECO:0007669"/>
    <property type="project" value="UniProtKB-UniRule"/>
</dbReference>
<dbReference type="GO" id="GO:0016887">
    <property type="term" value="F:ATP hydrolysis activity"/>
    <property type="evidence" value="ECO:0007669"/>
    <property type="project" value="InterPro"/>
</dbReference>
<dbReference type="GO" id="GO:0140662">
    <property type="term" value="F:ATP-dependent protein folding chaperone"/>
    <property type="evidence" value="ECO:0007669"/>
    <property type="project" value="InterPro"/>
</dbReference>
<dbReference type="GO" id="GO:0046983">
    <property type="term" value="F:protein dimerization activity"/>
    <property type="evidence" value="ECO:0007669"/>
    <property type="project" value="InterPro"/>
</dbReference>
<dbReference type="GO" id="GO:0051082">
    <property type="term" value="F:unfolded protein binding"/>
    <property type="evidence" value="ECO:0007669"/>
    <property type="project" value="UniProtKB-UniRule"/>
</dbReference>
<dbReference type="GO" id="GO:0008270">
    <property type="term" value="F:zinc ion binding"/>
    <property type="evidence" value="ECO:0007669"/>
    <property type="project" value="InterPro"/>
</dbReference>
<dbReference type="GO" id="GO:0051301">
    <property type="term" value="P:cell division"/>
    <property type="evidence" value="ECO:0007669"/>
    <property type="project" value="TreeGrafter"/>
</dbReference>
<dbReference type="GO" id="GO:0051603">
    <property type="term" value="P:proteolysis involved in protein catabolic process"/>
    <property type="evidence" value="ECO:0007669"/>
    <property type="project" value="TreeGrafter"/>
</dbReference>
<dbReference type="CDD" id="cd19497">
    <property type="entry name" value="RecA-like_ClpX"/>
    <property type="match status" value="1"/>
</dbReference>
<dbReference type="FunFam" id="1.10.8.60:FF:000002">
    <property type="entry name" value="ATP-dependent Clp protease ATP-binding subunit ClpX"/>
    <property type="match status" value="1"/>
</dbReference>
<dbReference type="FunFam" id="3.40.50.300:FF:000005">
    <property type="entry name" value="ATP-dependent Clp protease ATP-binding subunit ClpX"/>
    <property type="match status" value="1"/>
</dbReference>
<dbReference type="Gene3D" id="1.10.8.60">
    <property type="match status" value="1"/>
</dbReference>
<dbReference type="Gene3D" id="6.20.220.10">
    <property type="entry name" value="ClpX chaperone, C4-type zinc finger domain"/>
    <property type="match status" value="1"/>
</dbReference>
<dbReference type="Gene3D" id="3.40.50.300">
    <property type="entry name" value="P-loop containing nucleotide triphosphate hydrolases"/>
    <property type="match status" value="1"/>
</dbReference>
<dbReference type="HAMAP" id="MF_00175">
    <property type="entry name" value="ClpX"/>
    <property type="match status" value="1"/>
</dbReference>
<dbReference type="InterPro" id="IPR003593">
    <property type="entry name" value="AAA+_ATPase"/>
</dbReference>
<dbReference type="InterPro" id="IPR050052">
    <property type="entry name" value="ATP-dep_Clp_protease_ClpX"/>
</dbReference>
<dbReference type="InterPro" id="IPR003959">
    <property type="entry name" value="ATPase_AAA_core"/>
</dbReference>
<dbReference type="InterPro" id="IPR019489">
    <property type="entry name" value="Clp_ATPase_C"/>
</dbReference>
<dbReference type="InterPro" id="IPR004487">
    <property type="entry name" value="Clp_protease_ATP-bd_su_ClpX"/>
</dbReference>
<dbReference type="InterPro" id="IPR046425">
    <property type="entry name" value="ClpX_bact"/>
</dbReference>
<dbReference type="InterPro" id="IPR027417">
    <property type="entry name" value="P-loop_NTPase"/>
</dbReference>
<dbReference type="InterPro" id="IPR010603">
    <property type="entry name" value="Znf_CppX_C4"/>
</dbReference>
<dbReference type="InterPro" id="IPR038366">
    <property type="entry name" value="Znf_CppX_C4_sf"/>
</dbReference>
<dbReference type="NCBIfam" id="TIGR00382">
    <property type="entry name" value="clpX"/>
    <property type="match status" value="1"/>
</dbReference>
<dbReference type="NCBIfam" id="NF003745">
    <property type="entry name" value="PRK05342.1"/>
    <property type="match status" value="1"/>
</dbReference>
<dbReference type="PANTHER" id="PTHR48102:SF7">
    <property type="entry name" value="ATP-DEPENDENT CLP PROTEASE ATP-BINDING SUBUNIT CLPX-LIKE, MITOCHONDRIAL"/>
    <property type="match status" value="1"/>
</dbReference>
<dbReference type="PANTHER" id="PTHR48102">
    <property type="entry name" value="ATP-DEPENDENT CLP PROTEASE ATP-BINDING SUBUNIT CLPX-LIKE, MITOCHONDRIAL-RELATED"/>
    <property type="match status" value="1"/>
</dbReference>
<dbReference type="Pfam" id="PF07724">
    <property type="entry name" value="AAA_2"/>
    <property type="match status" value="1"/>
</dbReference>
<dbReference type="Pfam" id="PF10431">
    <property type="entry name" value="ClpB_D2-small"/>
    <property type="match status" value="1"/>
</dbReference>
<dbReference type="Pfam" id="PF06689">
    <property type="entry name" value="zf-C4_ClpX"/>
    <property type="match status" value="1"/>
</dbReference>
<dbReference type="SMART" id="SM00382">
    <property type="entry name" value="AAA"/>
    <property type="match status" value="1"/>
</dbReference>
<dbReference type="SMART" id="SM01086">
    <property type="entry name" value="ClpB_D2-small"/>
    <property type="match status" value="1"/>
</dbReference>
<dbReference type="SMART" id="SM00994">
    <property type="entry name" value="zf-C4_ClpX"/>
    <property type="match status" value="1"/>
</dbReference>
<dbReference type="SUPFAM" id="SSF57716">
    <property type="entry name" value="Glucocorticoid receptor-like (DNA-binding domain)"/>
    <property type="match status" value="1"/>
</dbReference>
<dbReference type="SUPFAM" id="SSF52540">
    <property type="entry name" value="P-loop containing nucleoside triphosphate hydrolases"/>
    <property type="match status" value="1"/>
</dbReference>
<dbReference type="PROSITE" id="PS51902">
    <property type="entry name" value="CLPX_ZB"/>
    <property type="match status" value="1"/>
</dbReference>
<proteinExistence type="inferred from homology"/>
<protein>
    <recommendedName>
        <fullName evidence="1">ATP-dependent Clp protease ATP-binding subunit ClpX</fullName>
    </recommendedName>
</protein>
<keyword id="KW-0067">ATP-binding</keyword>
<keyword id="KW-0143">Chaperone</keyword>
<keyword id="KW-0479">Metal-binding</keyword>
<keyword id="KW-0547">Nucleotide-binding</keyword>
<keyword id="KW-1185">Reference proteome</keyword>
<keyword id="KW-0862">Zinc</keyword>
<name>CLPX_DESAH</name>
<reference key="1">
    <citation type="journal article" date="2009" name="Environ. Microbiol.">
        <title>Genome sequence of Desulfobacterium autotrophicum HRM2, a marine sulfate reducer oxidizing organic carbon completely to carbon dioxide.</title>
        <authorList>
            <person name="Strittmatter A.W."/>
            <person name="Liesegang H."/>
            <person name="Rabus R."/>
            <person name="Decker I."/>
            <person name="Amann J."/>
            <person name="Andres S."/>
            <person name="Henne A."/>
            <person name="Fricke W.F."/>
            <person name="Martinez-Arias R."/>
            <person name="Bartels D."/>
            <person name="Goesmann A."/>
            <person name="Krause L."/>
            <person name="Puehler A."/>
            <person name="Klenk H.P."/>
            <person name="Richter M."/>
            <person name="Schuler M."/>
            <person name="Gloeckner F.O."/>
            <person name="Meyerdierks A."/>
            <person name="Gottschalk G."/>
            <person name="Amann R."/>
        </authorList>
    </citation>
    <scope>NUCLEOTIDE SEQUENCE [LARGE SCALE GENOMIC DNA]</scope>
    <source>
        <strain>ATCC 43914 / DSM 3382 / VKM B-1955 / HRM2</strain>
    </source>
</reference>